<geneLocation type="chloroplast"/>
<sequence length="182" mass="20855">MKPDSIRRYNVIGSRRISNYWWAIIIGSGGLGFLFTGLSSYLQFNLLPIIHAEKIIFFPQGLVMSFYGILGIFFSLYLGLTILFSVGEGFNEFNKELGIIRIFRWGFPGKNRRIDLSYSIDDVKAIRVELKDGINPKRTIYLCIKGQRQIPLTRVGQPLTLEEIEMQAAELAQFLQKDLLLN</sequence>
<evidence type="ECO:0000255" key="1">
    <source>
        <dbReference type="HAMAP-Rule" id="MF_00437"/>
    </source>
</evidence>
<reference key="1">
    <citation type="journal article" date="2005" name="Mol. Biol. Evol.">
        <title>The chloroplast genome sequence of the green alga Pseudendoclonium akinetum (Ulvophyceae) reveals unusual structural features and new insights into the branching order of chlorophyte lineages.</title>
        <authorList>
            <person name="Pombert J.-F."/>
            <person name="Otis C."/>
            <person name="Lemieux C."/>
            <person name="Turmel M."/>
        </authorList>
    </citation>
    <scope>NUCLEOTIDE SEQUENCE [LARGE SCALE GENOMIC DNA]</scope>
    <source>
        <strain>UTEX 1912</strain>
    </source>
</reference>
<gene>
    <name evidence="1" type="primary">ycf4</name>
</gene>
<feature type="chain" id="PRO_0000275669" description="Photosystem I assembly protein Ycf4">
    <location>
        <begin position="1"/>
        <end position="182"/>
    </location>
</feature>
<feature type="transmembrane region" description="Helical" evidence="1">
    <location>
        <begin position="22"/>
        <end position="42"/>
    </location>
</feature>
<feature type="transmembrane region" description="Helical" evidence="1">
    <location>
        <begin position="66"/>
        <end position="86"/>
    </location>
</feature>
<organism>
    <name type="scientific">Tupiella akineta</name>
    <name type="common">Green alga</name>
    <name type="synonym">Pseudendoclonium akinetum</name>
    <dbReference type="NCBI Taxonomy" id="160070"/>
    <lineage>
        <taxon>Eukaryota</taxon>
        <taxon>Viridiplantae</taxon>
        <taxon>Chlorophyta</taxon>
        <taxon>Ulvophyceae</taxon>
        <taxon>OUU clade</taxon>
        <taxon>Ulotrichales</taxon>
        <taxon>Tupiellaceae</taxon>
        <taxon>Tupiella</taxon>
    </lineage>
</organism>
<name>YCF4_TUPAK</name>
<keyword id="KW-0150">Chloroplast</keyword>
<keyword id="KW-0472">Membrane</keyword>
<keyword id="KW-0602">Photosynthesis</keyword>
<keyword id="KW-0934">Plastid</keyword>
<keyword id="KW-0793">Thylakoid</keyword>
<keyword id="KW-0812">Transmembrane</keyword>
<keyword id="KW-1133">Transmembrane helix</keyword>
<dbReference type="EMBL" id="AY835431">
    <property type="protein sequence ID" value="AAV80675.1"/>
    <property type="molecule type" value="Genomic_DNA"/>
</dbReference>
<dbReference type="RefSeq" id="YP_636253.1">
    <property type="nucleotide sequence ID" value="NC_008114.1"/>
</dbReference>
<dbReference type="SMR" id="Q3ZJ14"/>
<dbReference type="GeneID" id="4108747"/>
<dbReference type="GO" id="GO:0009535">
    <property type="term" value="C:chloroplast thylakoid membrane"/>
    <property type="evidence" value="ECO:0007669"/>
    <property type="project" value="UniProtKB-SubCell"/>
</dbReference>
<dbReference type="GO" id="GO:0009522">
    <property type="term" value="C:photosystem I"/>
    <property type="evidence" value="ECO:0007669"/>
    <property type="project" value="InterPro"/>
</dbReference>
<dbReference type="GO" id="GO:0015979">
    <property type="term" value="P:photosynthesis"/>
    <property type="evidence" value="ECO:0007669"/>
    <property type="project" value="UniProtKB-UniRule"/>
</dbReference>
<dbReference type="HAMAP" id="MF_00437">
    <property type="entry name" value="Ycf4"/>
    <property type="match status" value="1"/>
</dbReference>
<dbReference type="InterPro" id="IPR003359">
    <property type="entry name" value="PSI_Ycf4_assembly"/>
</dbReference>
<dbReference type="NCBIfam" id="NF002712">
    <property type="entry name" value="PRK02542.1"/>
    <property type="match status" value="1"/>
</dbReference>
<dbReference type="PANTHER" id="PTHR33288">
    <property type="match status" value="1"/>
</dbReference>
<dbReference type="PANTHER" id="PTHR33288:SF4">
    <property type="entry name" value="PHOTOSYSTEM I ASSEMBLY PROTEIN YCF4"/>
    <property type="match status" value="1"/>
</dbReference>
<dbReference type="Pfam" id="PF02392">
    <property type="entry name" value="Ycf4"/>
    <property type="match status" value="1"/>
</dbReference>
<protein>
    <recommendedName>
        <fullName evidence="1">Photosystem I assembly protein Ycf4</fullName>
    </recommendedName>
</protein>
<proteinExistence type="inferred from homology"/>
<comment type="function">
    <text evidence="1">Seems to be required for the assembly of the photosystem I complex.</text>
</comment>
<comment type="subcellular location">
    <subcellularLocation>
        <location evidence="1">Plastid</location>
        <location evidence="1">Chloroplast thylakoid membrane</location>
        <topology evidence="1">Multi-pass membrane protein</topology>
    </subcellularLocation>
</comment>
<comment type="similarity">
    <text evidence="1">Belongs to the Ycf4 family.</text>
</comment>
<accession>Q3ZJ14</accession>